<feature type="chain" id="PRO_0000143991" description="Protein S100-A7A">
    <location>
        <begin position="1"/>
        <end position="101"/>
    </location>
</feature>
<feature type="domain" description="EF-hand 1" evidence="3">
    <location>
        <begin position="13"/>
        <end position="48"/>
    </location>
</feature>
<feature type="domain" description="EF-hand 2" evidence="2">
    <location>
        <begin position="50"/>
        <end position="85"/>
    </location>
</feature>
<feature type="binding site">
    <location>
        <position position="18"/>
    </location>
    <ligand>
        <name>Zn(2+)</name>
        <dbReference type="ChEBI" id="CHEBI:29105"/>
        <label>1</label>
    </ligand>
</feature>
<feature type="binding site">
    <location>
        <position position="28"/>
    </location>
    <ligand>
        <name>Zn(2+)</name>
        <dbReference type="ChEBI" id="CHEBI:29105"/>
        <label>2</label>
    </ligand>
</feature>
<feature type="binding site">
    <location>
        <position position="38"/>
    </location>
    <ligand>
        <name>Zn(2+)</name>
        <dbReference type="ChEBI" id="CHEBI:29105"/>
        <label>2</label>
    </ligand>
</feature>
<feature type="binding site" evidence="2">
    <location>
        <position position="63"/>
    </location>
    <ligand>
        <name>Ca(2+)</name>
        <dbReference type="ChEBI" id="CHEBI:29108"/>
        <note>high affinity</note>
    </ligand>
</feature>
<feature type="binding site" evidence="2">
    <location>
        <position position="65"/>
    </location>
    <ligand>
        <name>Ca(2+)</name>
        <dbReference type="ChEBI" id="CHEBI:29108"/>
        <note>high affinity</note>
    </ligand>
</feature>
<feature type="binding site">
    <location>
        <position position="66"/>
    </location>
    <ligand>
        <name>Zn(2+)</name>
        <dbReference type="ChEBI" id="CHEBI:29105"/>
        <label>2</label>
    </ligand>
</feature>
<feature type="binding site" evidence="2">
    <location>
        <position position="67"/>
    </location>
    <ligand>
        <name>Ca(2+)</name>
        <dbReference type="ChEBI" id="CHEBI:29108"/>
        <note>high affinity</note>
    </ligand>
</feature>
<feature type="binding site" evidence="2">
    <location>
        <position position="69"/>
    </location>
    <ligand>
        <name>Ca(2+)</name>
        <dbReference type="ChEBI" id="CHEBI:29108"/>
        <note>high affinity</note>
    </ligand>
</feature>
<feature type="binding site" evidence="2">
    <location>
        <position position="74"/>
    </location>
    <ligand>
        <name>Ca(2+)</name>
        <dbReference type="ChEBI" id="CHEBI:29108"/>
        <note>high affinity</note>
    </ligand>
</feature>
<feature type="binding site">
    <location>
        <position position="87"/>
    </location>
    <ligand>
        <name>Zn(2+)</name>
        <dbReference type="ChEBI" id="CHEBI:29105"/>
        <label>1</label>
    </ligand>
</feature>
<feature type="binding site">
    <location>
        <position position="91"/>
    </location>
    <ligand>
        <name>Zn(2+)</name>
        <dbReference type="ChEBI" id="CHEBI:29105"/>
        <label>1</label>
    </ligand>
</feature>
<feature type="sequence variant" id="VAR_061048" description="In dbSNP:rs55985140.">
    <original>R</original>
    <variation>H</variation>
    <location>
        <position position="23"/>
    </location>
</feature>
<feature type="sequence variant" id="VAR_048468" description="In dbSNP:rs3006414.">
    <original>A</original>
    <variation>T</variation>
    <location>
        <position position="84"/>
    </location>
</feature>
<feature type="helix" evidence="4">
    <location>
        <begin position="5"/>
        <end position="20"/>
    </location>
</feature>
<feature type="helix" evidence="4">
    <location>
        <begin position="29"/>
        <end position="39"/>
    </location>
</feature>
<feature type="helix" evidence="4">
    <location>
        <begin position="41"/>
        <end position="49"/>
    </location>
</feature>
<feature type="helix" evidence="4">
    <location>
        <begin position="54"/>
        <end position="62"/>
    </location>
</feature>
<feature type="strand" evidence="4">
    <location>
        <begin position="67"/>
        <end position="70"/>
    </location>
</feature>
<feature type="helix" evidence="4">
    <location>
        <begin position="72"/>
        <end position="90"/>
    </location>
</feature>
<sequence>MSNTQAERSIIGMIDMFHKYTGRDGKIEKPSLLTMMKENFPNFLSACDKKGIHYLATVFEKKDKNEDKKIDFSEFLSLLGDIAADYHKQSHGAAPCSGGSQ</sequence>
<proteinExistence type="evidence at protein level"/>
<evidence type="ECO:0000250" key="1"/>
<evidence type="ECO:0000255" key="2">
    <source>
        <dbReference type="PROSITE-ProRule" id="PRU00448"/>
    </source>
</evidence>
<evidence type="ECO:0000305" key="3"/>
<evidence type="ECO:0007829" key="4">
    <source>
        <dbReference type="PDB" id="4AQI"/>
    </source>
</evidence>
<reference key="1">
    <citation type="journal article" date="2003" name="FASEB J.">
        <title>Molecular cloning and characterization of alternatively spliced mRNA isoforms from psoriatic skin encoding a novel member of the S100 family.</title>
        <authorList>
            <person name="Wolf R."/>
            <person name="Mirmohammadsadegh A."/>
            <person name="Walz M."/>
            <person name="Lysa B."/>
            <person name="Tartler U."/>
            <person name="Remus R."/>
            <person name="Hengge U."/>
            <person name="Michel G."/>
            <person name="Ruzicka T."/>
        </authorList>
    </citation>
    <scope>NUCLEOTIDE SEQUENCE [GENOMIC DNA / MRNA]</scope>
    <source>
        <tissue>Epidermis</tissue>
    </source>
</reference>
<reference key="2">
    <citation type="journal article" date="2006" name="Nature">
        <title>The DNA sequence and biological annotation of human chromosome 1.</title>
        <authorList>
            <person name="Gregory S.G."/>
            <person name="Barlow K.F."/>
            <person name="McLay K.E."/>
            <person name="Kaul R."/>
            <person name="Swarbreck D."/>
            <person name="Dunham A."/>
            <person name="Scott C.E."/>
            <person name="Howe K.L."/>
            <person name="Woodfine K."/>
            <person name="Spencer C.C.A."/>
            <person name="Jones M.C."/>
            <person name="Gillson C."/>
            <person name="Searle S."/>
            <person name="Zhou Y."/>
            <person name="Kokocinski F."/>
            <person name="McDonald L."/>
            <person name="Evans R."/>
            <person name="Phillips K."/>
            <person name="Atkinson A."/>
            <person name="Cooper R."/>
            <person name="Jones C."/>
            <person name="Hall R.E."/>
            <person name="Andrews T.D."/>
            <person name="Lloyd C."/>
            <person name="Ainscough R."/>
            <person name="Almeida J.P."/>
            <person name="Ambrose K.D."/>
            <person name="Anderson F."/>
            <person name="Andrew R.W."/>
            <person name="Ashwell R.I.S."/>
            <person name="Aubin K."/>
            <person name="Babbage A.K."/>
            <person name="Bagguley C.L."/>
            <person name="Bailey J."/>
            <person name="Beasley H."/>
            <person name="Bethel G."/>
            <person name="Bird C.P."/>
            <person name="Bray-Allen S."/>
            <person name="Brown J.Y."/>
            <person name="Brown A.J."/>
            <person name="Buckley D."/>
            <person name="Burton J."/>
            <person name="Bye J."/>
            <person name="Carder C."/>
            <person name="Chapman J.C."/>
            <person name="Clark S.Y."/>
            <person name="Clarke G."/>
            <person name="Clee C."/>
            <person name="Cobley V."/>
            <person name="Collier R.E."/>
            <person name="Corby N."/>
            <person name="Coville G.J."/>
            <person name="Davies J."/>
            <person name="Deadman R."/>
            <person name="Dunn M."/>
            <person name="Earthrowl M."/>
            <person name="Ellington A.G."/>
            <person name="Errington H."/>
            <person name="Frankish A."/>
            <person name="Frankland J."/>
            <person name="French L."/>
            <person name="Garner P."/>
            <person name="Garnett J."/>
            <person name="Gay L."/>
            <person name="Ghori M.R.J."/>
            <person name="Gibson R."/>
            <person name="Gilby L.M."/>
            <person name="Gillett W."/>
            <person name="Glithero R.J."/>
            <person name="Grafham D.V."/>
            <person name="Griffiths C."/>
            <person name="Griffiths-Jones S."/>
            <person name="Grocock R."/>
            <person name="Hammond S."/>
            <person name="Harrison E.S.I."/>
            <person name="Hart E."/>
            <person name="Haugen E."/>
            <person name="Heath P.D."/>
            <person name="Holmes S."/>
            <person name="Holt K."/>
            <person name="Howden P.J."/>
            <person name="Hunt A.R."/>
            <person name="Hunt S.E."/>
            <person name="Hunter G."/>
            <person name="Isherwood J."/>
            <person name="James R."/>
            <person name="Johnson C."/>
            <person name="Johnson D."/>
            <person name="Joy A."/>
            <person name="Kay M."/>
            <person name="Kershaw J.K."/>
            <person name="Kibukawa M."/>
            <person name="Kimberley A.M."/>
            <person name="King A."/>
            <person name="Knights A.J."/>
            <person name="Lad H."/>
            <person name="Laird G."/>
            <person name="Lawlor S."/>
            <person name="Leongamornlert D.A."/>
            <person name="Lloyd D.M."/>
            <person name="Loveland J."/>
            <person name="Lovell J."/>
            <person name="Lush M.J."/>
            <person name="Lyne R."/>
            <person name="Martin S."/>
            <person name="Mashreghi-Mohammadi M."/>
            <person name="Matthews L."/>
            <person name="Matthews N.S.W."/>
            <person name="McLaren S."/>
            <person name="Milne S."/>
            <person name="Mistry S."/>
            <person name="Moore M.J.F."/>
            <person name="Nickerson T."/>
            <person name="O'Dell C.N."/>
            <person name="Oliver K."/>
            <person name="Palmeiri A."/>
            <person name="Palmer S.A."/>
            <person name="Parker A."/>
            <person name="Patel D."/>
            <person name="Pearce A.V."/>
            <person name="Peck A.I."/>
            <person name="Pelan S."/>
            <person name="Phelps K."/>
            <person name="Phillimore B.J."/>
            <person name="Plumb R."/>
            <person name="Rajan J."/>
            <person name="Raymond C."/>
            <person name="Rouse G."/>
            <person name="Saenphimmachak C."/>
            <person name="Sehra H.K."/>
            <person name="Sheridan E."/>
            <person name="Shownkeen R."/>
            <person name="Sims S."/>
            <person name="Skuce C.D."/>
            <person name="Smith M."/>
            <person name="Steward C."/>
            <person name="Subramanian S."/>
            <person name="Sycamore N."/>
            <person name="Tracey A."/>
            <person name="Tromans A."/>
            <person name="Van Helmond Z."/>
            <person name="Wall M."/>
            <person name="Wallis J.M."/>
            <person name="White S."/>
            <person name="Whitehead S.L."/>
            <person name="Wilkinson J.E."/>
            <person name="Willey D.L."/>
            <person name="Williams H."/>
            <person name="Wilming L."/>
            <person name="Wray P.W."/>
            <person name="Wu Z."/>
            <person name="Coulson A."/>
            <person name="Vaudin M."/>
            <person name="Sulston J.E."/>
            <person name="Durbin R.M."/>
            <person name="Hubbard T."/>
            <person name="Wooster R."/>
            <person name="Dunham I."/>
            <person name="Carter N.P."/>
            <person name="McVean G."/>
            <person name="Ross M.T."/>
            <person name="Harrow J."/>
            <person name="Olson M.V."/>
            <person name="Beck S."/>
            <person name="Rogers J."/>
            <person name="Bentley D.R."/>
        </authorList>
    </citation>
    <scope>NUCLEOTIDE SEQUENCE [LARGE SCALE GENOMIC DNA]</scope>
</reference>
<reference key="3">
    <citation type="submission" date="2005-09" db="EMBL/GenBank/DDBJ databases">
        <authorList>
            <person name="Mural R.J."/>
            <person name="Istrail S."/>
            <person name="Sutton G.G."/>
            <person name="Florea L."/>
            <person name="Halpern A.L."/>
            <person name="Mobarry C.M."/>
            <person name="Lippert R."/>
            <person name="Walenz B."/>
            <person name="Shatkay H."/>
            <person name="Dew I."/>
            <person name="Miller J.R."/>
            <person name="Flanigan M.J."/>
            <person name="Edwards N.J."/>
            <person name="Bolanos R."/>
            <person name="Fasulo D."/>
            <person name="Halldorsson B.V."/>
            <person name="Hannenhalli S."/>
            <person name="Turner R."/>
            <person name="Yooseph S."/>
            <person name="Lu F."/>
            <person name="Nusskern D.R."/>
            <person name="Shue B.C."/>
            <person name="Zheng X.H."/>
            <person name="Zhong F."/>
            <person name="Delcher A.L."/>
            <person name="Huson D.H."/>
            <person name="Kravitz S.A."/>
            <person name="Mouchard L."/>
            <person name="Reinert K."/>
            <person name="Remington K.A."/>
            <person name="Clark A.G."/>
            <person name="Waterman M.S."/>
            <person name="Eichler E.E."/>
            <person name="Adams M.D."/>
            <person name="Hunkapiller M.W."/>
            <person name="Myers E.W."/>
            <person name="Venter J.C."/>
        </authorList>
    </citation>
    <scope>NUCLEOTIDE SEQUENCE [LARGE SCALE GENOMIC DNA]</scope>
</reference>
<reference key="4">
    <citation type="journal article" date="2003" name="J. Mol. Evol.">
        <title>Genomic and phylogenetic analysis of the S100A7 (psoriasin) gene duplications within the region of the S100 gene cluster on human chromosome 1q21.</title>
        <authorList>
            <person name="Kulski J.K."/>
            <person name="Lim C.P."/>
            <person name="Dunn D.S."/>
            <person name="Bellgard M."/>
        </authorList>
    </citation>
    <scope>GENOMIC ORGANIZATION</scope>
</reference>
<reference key="5">
    <citation type="journal article" date="2012" name="BMC Struct. Biol.">
        <title>Structural characterization of S100A15 reveals a novel zinc coordination site among S100 proteins and altered surface chemistry with functional implications for receptor binding.</title>
        <authorList>
            <person name="Murray J.I."/>
            <person name="Tonkin M.L."/>
            <person name="Whiting A.L."/>
            <person name="Peng F."/>
            <person name="Farnell B."/>
            <person name="Cullen J.T."/>
            <person name="Hof F."/>
            <person name="Boulanger M.J."/>
        </authorList>
    </citation>
    <scope>X-RAY CRYSTALLOGRAPHY (1.7 ANGSTROMS)</scope>
    <scope>CALCIUM-BINDING SITES</scope>
    <scope>ZINC-BINDING SITES</scope>
</reference>
<protein>
    <recommendedName>
        <fullName>Protein S100-A7A</fullName>
    </recommendedName>
    <alternativeName>
        <fullName>S100 calcium-binding protein A15</fullName>
    </alternativeName>
    <alternativeName>
        <fullName>S100 calcium-binding protein A7-like 1</fullName>
    </alternativeName>
    <alternativeName>
        <fullName>S100 calcium-binding protein A7A</fullName>
    </alternativeName>
</protein>
<name>S1A7A_HUMAN</name>
<comment type="function">
    <text>May be involved in epidermal differentiation and inflammation and might therefore be important for the pathogenesis of psoriasis and other diseases.</text>
</comment>
<comment type="interaction">
    <interactant intactId="EBI-13077820">
        <id>Q86SG5</id>
    </interactant>
    <interactant intactId="EBI-12357161">
        <id>Q5SYC1</id>
        <label>CLVS2</label>
    </interactant>
    <organismsDiffer>false</organismsDiffer>
    <experiments>3</experiments>
</comment>
<comment type="interaction">
    <interactant intactId="EBI-13077820">
        <id>Q86SG5</id>
    </interactant>
    <interactant intactId="EBI-12006206">
        <id>Q5SY68</id>
        <label>S100A7L2</label>
    </interactant>
    <organismsDiffer>false</organismsDiffer>
    <experiments>8</experiments>
</comment>
<comment type="subcellular location">
    <subcellularLocation>
        <location evidence="1">Cytoplasm</location>
    </subcellularLocation>
</comment>
<comment type="tissue specificity">
    <text>Overexpressed in psoriasis.</text>
</comment>
<comment type="similarity">
    <text evidence="3">Belongs to the S-100 family.</text>
</comment>
<dbReference type="EMBL" id="AY189117">
    <property type="protein sequence ID" value="AAO40032.1"/>
    <property type="molecule type" value="Genomic_DNA"/>
</dbReference>
<dbReference type="EMBL" id="AY189118">
    <property type="protein sequence ID" value="AAO40033.1"/>
    <property type="molecule type" value="mRNA"/>
</dbReference>
<dbReference type="EMBL" id="AY189119">
    <property type="protein sequence ID" value="AAO40034.1"/>
    <property type="molecule type" value="mRNA"/>
</dbReference>
<dbReference type="EMBL" id="AL591704">
    <property type="status" value="NOT_ANNOTATED_CDS"/>
    <property type="molecule type" value="Genomic_DNA"/>
</dbReference>
<dbReference type="EMBL" id="CH471121">
    <property type="protein sequence ID" value="EAW53328.1"/>
    <property type="molecule type" value="Genomic_DNA"/>
</dbReference>
<dbReference type="EMBL" id="CH471121">
    <property type="protein sequence ID" value="EAW53329.1"/>
    <property type="molecule type" value="Genomic_DNA"/>
</dbReference>
<dbReference type="EMBL" id="BR000043">
    <property type="protein sequence ID" value="FAA00014.1"/>
    <property type="molecule type" value="Genomic_DNA"/>
</dbReference>
<dbReference type="CCDS" id="CCDS30872.1"/>
<dbReference type="RefSeq" id="NP_789793.1">
    <property type="nucleotide sequence ID" value="NM_176823.4"/>
</dbReference>
<dbReference type="PDB" id="4AQI">
    <property type="method" value="X-ray"/>
    <property type="resolution" value="1.70 A"/>
    <property type="chains" value="A=1-101"/>
</dbReference>
<dbReference type="PDBsum" id="4AQI"/>
<dbReference type="SMR" id="Q86SG5"/>
<dbReference type="BioGRID" id="130711">
    <property type="interactions" value="108"/>
</dbReference>
<dbReference type="FunCoup" id="Q86SG5">
    <property type="interactions" value="341"/>
</dbReference>
<dbReference type="IntAct" id="Q86SG5">
    <property type="interactions" value="75"/>
</dbReference>
<dbReference type="STRING" id="9606.ENSP00000357718"/>
<dbReference type="GlyGen" id="Q86SG5">
    <property type="glycosylation" value="1 site, 1 O-linked glycan (1 site)"/>
</dbReference>
<dbReference type="iPTMnet" id="Q86SG5"/>
<dbReference type="PhosphoSitePlus" id="Q86SG5"/>
<dbReference type="BioMuta" id="S100A7A"/>
<dbReference type="DMDM" id="37088296"/>
<dbReference type="jPOST" id="Q86SG5"/>
<dbReference type="MassIVE" id="Q86SG5"/>
<dbReference type="PaxDb" id="9606-ENSP00000357718"/>
<dbReference type="PeptideAtlas" id="Q86SG5"/>
<dbReference type="PRIDE" id="Q86SG5"/>
<dbReference type="ProteomicsDB" id="69587"/>
<dbReference type="Pumba" id="Q86SG5"/>
<dbReference type="Antibodypedia" id="56992">
    <property type="antibodies" value="38 antibodies from 11 providers"/>
</dbReference>
<dbReference type="DNASU" id="338324"/>
<dbReference type="Ensembl" id="ENST00000329256.2">
    <property type="protein sequence ID" value="ENSP00000329008.2"/>
    <property type="gene ID" value="ENSG00000184330.12"/>
</dbReference>
<dbReference type="Ensembl" id="ENST00000368728.2">
    <property type="protein sequence ID" value="ENSP00000357717.1"/>
    <property type="gene ID" value="ENSG00000184330.12"/>
</dbReference>
<dbReference type="Ensembl" id="ENST00000368729.9">
    <property type="protein sequence ID" value="ENSP00000357718.3"/>
    <property type="gene ID" value="ENSG00000184330.12"/>
</dbReference>
<dbReference type="GeneID" id="338324"/>
<dbReference type="KEGG" id="hsa:338324"/>
<dbReference type="MANE-Select" id="ENST00000368729.9">
    <property type="protein sequence ID" value="ENSP00000357718.3"/>
    <property type="RefSeq nucleotide sequence ID" value="NM_176823.4"/>
    <property type="RefSeq protein sequence ID" value="NP_789793.1"/>
</dbReference>
<dbReference type="UCSC" id="uc001fbt.1">
    <property type="organism name" value="human"/>
</dbReference>
<dbReference type="AGR" id="HGNC:21657"/>
<dbReference type="CTD" id="338324"/>
<dbReference type="DisGeNET" id="338324"/>
<dbReference type="GeneCards" id="S100A7A"/>
<dbReference type="HGNC" id="HGNC:21657">
    <property type="gene designation" value="S100A7A"/>
</dbReference>
<dbReference type="HPA" id="ENSG00000184330">
    <property type="expression patterns" value="Group enriched (esophagus, lymphoid tissue, skin, vagina)"/>
</dbReference>
<dbReference type="MIM" id="617427">
    <property type="type" value="gene"/>
</dbReference>
<dbReference type="neXtProt" id="NX_Q86SG5"/>
<dbReference type="OpenTargets" id="ENSG00000184330"/>
<dbReference type="PharmGKB" id="PA162402333"/>
<dbReference type="VEuPathDB" id="HostDB:ENSG00000184330"/>
<dbReference type="eggNOG" id="ENOG502SZJ5">
    <property type="taxonomic scope" value="Eukaryota"/>
</dbReference>
<dbReference type="GeneTree" id="ENSGT00940000163488"/>
<dbReference type="HOGENOM" id="CLU_138624_5_0_1"/>
<dbReference type="InParanoid" id="Q86SG5"/>
<dbReference type="OMA" id="NTQARRF"/>
<dbReference type="OrthoDB" id="9450914at2759"/>
<dbReference type="PAN-GO" id="Q86SG5">
    <property type="GO annotations" value="3 GO annotations based on evolutionary models"/>
</dbReference>
<dbReference type="PhylomeDB" id="Q86SG5"/>
<dbReference type="TreeFam" id="TF341148"/>
<dbReference type="PathwayCommons" id="Q86SG5"/>
<dbReference type="Reactome" id="R-HSA-6799990">
    <property type="pathway name" value="Metal sequestration by antimicrobial proteins"/>
</dbReference>
<dbReference type="SignaLink" id="Q86SG5"/>
<dbReference type="BioGRID-ORCS" id="338324">
    <property type="hits" value="23 hits in 1045 CRISPR screens"/>
</dbReference>
<dbReference type="CD-CODE" id="DEE660B4">
    <property type="entry name" value="Stress granule"/>
</dbReference>
<dbReference type="ChiTaRS" id="S100A7A">
    <property type="organism name" value="human"/>
</dbReference>
<dbReference type="EvolutionaryTrace" id="Q86SG5"/>
<dbReference type="GeneWiki" id="S100A15"/>
<dbReference type="GenomeRNAi" id="338324"/>
<dbReference type="Pharos" id="Q86SG5">
    <property type="development level" value="Tbio"/>
</dbReference>
<dbReference type="PRO" id="PR:Q86SG5"/>
<dbReference type="Proteomes" id="UP000005640">
    <property type="component" value="Chromosome 1"/>
</dbReference>
<dbReference type="RNAct" id="Q86SG5">
    <property type="molecule type" value="protein"/>
</dbReference>
<dbReference type="Bgee" id="ENSG00000184330">
    <property type="expression patterns" value="Expressed in male germ line stem cell (sensu Vertebrata) in testis and 56 other cell types or tissues"/>
</dbReference>
<dbReference type="GO" id="GO:0005737">
    <property type="term" value="C:cytoplasm"/>
    <property type="evidence" value="ECO:0000318"/>
    <property type="project" value="GO_Central"/>
</dbReference>
<dbReference type="GO" id="GO:0005829">
    <property type="term" value="C:cytosol"/>
    <property type="evidence" value="ECO:0000314"/>
    <property type="project" value="HPA"/>
</dbReference>
<dbReference type="GO" id="GO:0005509">
    <property type="term" value="F:calcium ion binding"/>
    <property type="evidence" value="ECO:0000318"/>
    <property type="project" value="GO_Central"/>
</dbReference>
<dbReference type="GO" id="GO:0048306">
    <property type="term" value="F:calcium-dependent protein binding"/>
    <property type="evidence" value="ECO:0000318"/>
    <property type="project" value="GO_Central"/>
</dbReference>
<dbReference type="GO" id="GO:0042802">
    <property type="term" value="F:identical protein binding"/>
    <property type="evidence" value="ECO:0000314"/>
    <property type="project" value="MGI"/>
</dbReference>
<dbReference type="GO" id="GO:0046914">
    <property type="term" value="F:transition metal ion binding"/>
    <property type="evidence" value="ECO:0007669"/>
    <property type="project" value="InterPro"/>
</dbReference>
<dbReference type="GO" id="GO:0043542">
    <property type="term" value="P:endothelial cell migration"/>
    <property type="evidence" value="ECO:0000318"/>
    <property type="project" value="GO_Central"/>
</dbReference>
<dbReference type="CDD" id="cd00213">
    <property type="entry name" value="S-100"/>
    <property type="match status" value="1"/>
</dbReference>
<dbReference type="FunFam" id="1.10.238.10:FF:000296">
    <property type="entry name" value="Protein S100"/>
    <property type="match status" value="1"/>
</dbReference>
<dbReference type="Gene3D" id="1.10.238.10">
    <property type="entry name" value="EF-hand"/>
    <property type="match status" value="1"/>
</dbReference>
<dbReference type="InterPro" id="IPR011992">
    <property type="entry name" value="EF-hand-dom_pair"/>
</dbReference>
<dbReference type="InterPro" id="IPR018247">
    <property type="entry name" value="EF_Hand_1_Ca_BS"/>
</dbReference>
<dbReference type="InterPro" id="IPR002048">
    <property type="entry name" value="EF_hand_dom"/>
</dbReference>
<dbReference type="InterPro" id="IPR034325">
    <property type="entry name" value="S-100_dom"/>
</dbReference>
<dbReference type="InterPro" id="IPR001751">
    <property type="entry name" value="S100/CaBP7/8-like_CS"/>
</dbReference>
<dbReference type="InterPro" id="IPR013787">
    <property type="entry name" value="S100_Ca-bd_sub"/>
</dbReference>
<dbReference type="PANTHER" id="PTHR11639:SF146">
    <property type="entry name" value="PROTEIN S100-A7A"/>
    <property type="match status" value="1"/>
</dbReference>
<dbReference type="PANTHER" id="PTHR11639">
    <property type="entry name" value="S100 CALCIUM-BINDING PROTEIN"/>
    <property type="match status" value="1"/>
</dbReference>
<dbReference type="Pfam" id="PF01023">
    <property type="entry name" value="S_100"/>
    <property type="match status" value="1"/>
</dbReference>
<dbReference type="SMART" id="SM01394">
    <property type="entry name" value="S_100"/>
    <property type="match status" value="1"/>
</dbReference>
<dbReference type="SUPFAM" id="SSF47473">
    <property type="entry name" value="EF-hand"/>
    <property type="match status" value="1"/>
</dbReference>
<dbReference type="PROSITE" id="PS00018">
    <property type="entry name" value="EF_HAND_1"/>
    <property type="match status" value="1"/>
</dbReference>
<dbReference type="PROSITE" id="PS50222">
    <property type="entry name" value="EF_HAND_2"/>
    <property type="match status" value="1"/>
</dbReference>
<dbReference type="PROSITE" id="PS00303">
    <property type="entry name" value="S100_CABP"/>
    <property type="match status" value="1"/>
</dbReference>
<gene>
    <name type="primary">S100A7A</name>
    <name type="synonym">S100A15</name>
    <name type="synonym">S100A7L1</name>
</gene>
<keyword id="KW-0002">3D-structure</keyword>
<keyword id="KW-0106">Calcium</keyword>
<keyword id="KW-0963">Cytoplasm</keyword>
<keyword id="KW-0479">Metal-binding</keyword>
<keyword id="KW-1267">Proteomics identification</keyword>
<keyword id="KW-1185">Reference proteome</keyword>
<keyword id="KW-0677">Repeat</keyword>
<keyword id="KW-0862">Zinc</keyword>
<accession>Q86SG5</accession>
<accession>D3DV38</accession>
<accession>Q5SY69</accession>
<organism>
    <name type="scientific">Homo sapiens</name>
    <name type="common">Human</name>
    <dbReference type="NCBI Taxonomy" id="9606"/>
    <lineage>
        <taxon>Eukaryota</taxon>
        <taxon>Metazoa</taxon>
        <taxon>Chordata</taxon>
        <taxon>Craniata</taxon>
        <taxon>Vertebrata</taxon>
        <taxon>Euteleostomi</taxon>
        <taxon>Mammalia</taxon>
        <taxon>Eutheria</taxon>
        <taxon>Euarchontoglires</taxon>
        <taxon>Primates</taxon>
        <taxon>Haplorrhini</taxon>
        <taxon>Catarrhini</taxon>
        <taxon>Hominidae</taxon>
        <taxon>Homo</taxon>
    </lineage>
</organism>